<reference key="1">
    <citation type="journal article" date="2005" name="Nature">
        <title>The DNA sequence of the human X chromosome.</title>
        <authorList>
            <person name="Ross M.T."/>
            <person name="Grafham D.V."/>
            <person name="Coffey A.J."/>
            <person name="Scherer S."/>
            <person name="McLay K."/>
            <person name="Muzny D."/>
            <person name="Platzer M."/>
            <person name="Howell G.R."/>
            <person name="Burrows C."/>
            <person name="Bird C.P."/>
            <person name="Frankish A."/>
            <person name="Lovell F.L."/>
            <person name="Howe K.L."/>
            <person name="Ashurst J.L."/>
            <person name="Fulton R.S."/>
            <person name="Sudbrak R."/>
            <person name="Wen G."/>
            <person name="Jones M.C."/>
            <person name="Hurles M.E."/>
            <person name="Andrews T.D."/>
            <person name="Scott C.E."/>
            <person name="Searle S."/>
            <person name="Ramser J."/>
            <person name="Whittaker A."/>
            <person name="Deadman R."/>
            <person name="Carter N.P."/>
            <person name="Hunt S.E."/>
            <person name="Chen R."/>
            <person name="Cree A."/>
            <person name="Gunaratne P."/>
            <person name="Havlak P."/>
            <person name="Hodgson A."/>
            <person name="Metzker M.L."/>
            <person name="Richards S."/>
            <person name="Scott G."/>
            <person name="Steffen D."/>
            <person name="Sodergren E."/>
            <person name="Wheeler D.A."/>
            <person name="Worley K.C."/>
            <person name="Ainscough R."/>
            <person name="Ambrose K.D."/>
            <person name="Ansari-Lari M.A."/>
            <person name="Aradhya S."/>
            <person name="Ashwell R.I."/>
            <person name="Babbage A.K."/>
            <person name="Bagguley C.L."/>
            <person name="Ballabio A."/>
            <person name="Banerjee R."/>
            <person name="Barker G.E."/>
            <person name="Barlow K.F."/>
            <person name="Barrett I.P."/>
            <person name="Bates K.N."/>
            <person name="Beare D.M."/>
            <person name="Beasley H."/>
            <person name="Beasley O."/>
            <person name="Beck A."/>
            <person name="Bethel G."/>
            <person name="Blechschmidt K."/>
            <person name="Brady N."/>
            <person name="Bray-Allen S."/>
            <person name="Bridgeman A.M."/>
            <person name="Brown A.J."/>
            <person name="Brown M.J."/>
            <person name="Bonnin D."/>
            <person name="Bruford E.A."/>
            <person name="Buhay C."/>
            <person name="Burch P."/>
            <person name="Burford D."/>
            <person name="Burgess J."/>
            <person name="Burrill W."/>
            <person name="Burton J."/>
            <person name="Bye J.M."/>
            <person name="Carder C."/>
            <person name="Carrel L."/>
            <person name="Chako J."/>
            <person name="Chapman J.C."/>
            <person name="Chavez D."/>
            <person name="Chen E."/>
            <person name="Chen G."/>
            <person name="Chen Y."/>
            <person name="Chen Z."/>
            <person name="Chinault C."/>
            <person name="Ciccodicola A."/>
            <person name="Clark S.Y."/>
            <person name="Clarke G."/>
            <person name="Clee C.M."/>
            <person name="Clegg S."/>
            <person name="Clerc-Blankenburg K."/>
            <person name="Clifford K."/>
            <person name="Cobley V."/>
            <person name="Cole C.G."/>
            <person name="Conquer J.S."/>
            <person name="Corby N."/>
            <person name="Connor R.E."/>
            <person name="David R."/>
            <person name="Davies J."/>
            <person name="Davis C."/>
            <person name="Davis J."/>
            <person name="Delgado O."/>
            <person name="Deshazo D."/>
            <person name="Dhami P."/>
            <person name="Ding Y."/>
            <person name="Dinh H."/>
            <person name="Dodsworth S."/>
            <person name="Draper H."/>
            <person name="Dugan-Rocha S."/>
            <person name="Dunham A."/>
            <person name="Dunn M."/>
            <person name="Durbin K.J."/>
            <person name="Dutta I."/>
            <person name="Eades T."/>
            <person name="Ellwood M."/>
            <person name="Emery-Cohen A."/>
            <person name="Errington H."/>
            <person name="Evans K.L."/>
            <person name="Faulkner L."/>
            <person name="Francis F."/>
            <person name="Frankland J."/>
            <person name="Fraser A.E."/>
            <person name="Galgoczy P."/>
            <person name="Gilbert J."/>
            <person name="Gill R."/>
            <person name="Gloeckner G."/>
            <person name="Gregory S.G."/>
            <person name="Gribble S."/>
            <person name="Griffiths C."/>
            <person name="Grocock R."/>
            <person name="Gu Y."/>
            <person name="Gwilliam R."/>
            <person name="Hamilton C."/>
            <person name="Hart E.A."/>
            <person name="Hawes A."/>
            <person name="Heath P.D."/>
            <person name="Heitmann K."/>
            <person name="Hennig S."/>
            <person name="Hernandez J."/>
            <person name="Hinzmann B."/>
            <person name="Ho S."/>
            <person name="Hoffs M."/>
            <person name="Howden P.J."/>
            <person name="Huckle E.J."/>
            <person name="Hume J."/>
            <person name="Hunt P.J."/>
            <person name="Hunt A.R."/>
            <person name="Isherwood J."/>
            <person name="Jacob L."/>
            <person name="Johnson D."/>
            <person name="Jones S."/>
            <person name="de Jong P.J."/>
            <person name="Joseph S.S."/>
            <person name="Keenan S."/>
            <person name="Kelly S."/>
            <person name="Kershaw J.K."/>
            <person name="Khan Z."/>
            <person name="Kioschis P."/>
            <person name="Klages S."/>
            <person name="Knights A.J."/>
            <person name="Kosiura A."/>
            <person name="Kovar-Smith C."/>
            <person name="Laird G.K."/>
            <person name="Langford C."/>
            <person name="Lawlor S."/>
            <person name="Leversha M."/>
            <person name="Lewis L."/>
            <person name="Liu W."/>
            <person name="Lloyd C."/>
            <person name="Lloyd D.M."/>
            <person name="Loulseged H."/>
            <person name="Loveland J.E."/>
            <person name="Lovell J.D."/>
            <person name="Lozado R."/>
            <person name="Lu J."/>
            <person name="Lyne R."/>
            <person name="Ma J."/>
            <person name="Maheshwari M."/>
            <person name="Matthews L.H."/>
            <person name="McDowall J."/>
            <person name="McLaren S."/>
            <person name="McMurray A."/>
            <person name="Meidl P."/>
            <person name="Meitinger T."/>
            <person name="Milne S."/>
            <person name="Miner G."/>
            <person name="Mistry S.L."/>
            <person name="Morgan M."/>
            <person name="Morris S."/>
            <person name="Mueller I."/>
            <person name="Mullikin J.C."/>
            <person name="Nguyen N."/>
            <person name="Nordsiek G."/>
            <person name="Nyakatura G."/>
            <person name="O'dell C.N."/>
            <person name="Okwuonu G."/>
            <person name="Palmer S."/>
            <person name="Pandian R."/>
            <person name="Parker D."/>
            <person name="Parrish J."/>
            <person name="Pasternak S."/>
            <person name="Patel D."/>
            <person name="Pearce A.V."/>
            <person name="Pearson D.M."/>
            <person name="Pelan S.E."/>
            <person name="Perez L."/>
            <person name="Porter K.M."/>
            <person name="Ramsey Y."/>
            <person name="Reichwald K."/>
            <person name="Rhodes S."/>
            <person name="Ridler K.A."/>
            <person name="Schlessinger D."/>
            <person name="Schueler M.G."/>
            <person name="Sehra H.K."/>
            <person name="Shaw-Smith C."/>
            <person name="Shen H."/>
            <person name="Sheridan E.M."/>
            <person name="Shownkeen R."/>
            <person name="Skuce C.D."/>
            <person name="Smith M.L."/>
            <person name="Sotheran E.C."/>
            <person name="Steingruber H.E."/>
            <person name="Steward C.A."/>
            <person name="Storey R."/>
            <person name="Swann R.M."/>
            <person name="Swarbreck D."/>
            <person name="Tabor P.E."/>
            <person name="Taudien S."/>
            <person name="Taylor T."/>
            <person name="Teague B."/>
            <person name="Thomas K."/>
            <person name="Thorpe A."/>
            <person name="Timms K."/>
            <person name="Tracey A."/>
            <person name="Trevanion S."/>
            <person name="Tromans A.C."/>
            <person name="d'Urso M."/>
            <person name="Verduzco D."/>
            <person name="Villasana D."/>
            <person name="Waldron L."/>
            <person name="Wall M."/>
            <person name="Wang Q."/>
            <person name="Warren J."/>
            <person name="Warry G.L."/>
            <person name="Wei X."/>
            <person name="West A."/>
            <person name="Whitehead S.L."/>
            <person name="Whiteley M.N."/>
            <person name="Wilkinson J.E."/>
            <person name="Willey D.L."/>
            <person name="Williams G."/>
            <person name="Williams L."/>
            <person name="Williamson A."/>
            <person name="Williamson H."/>
            <person name="Wilming L."/>
            <person name="Woodmansey R.L."/>
            <person name="Wray P.W."/>
            <person name="Yen J."/>
            <person name="Zhang J."/>
            <person name="Zhou J."/>
            <person name="Zoghbi H."/>
            <person name="Zorilla S."/>
            <person name="Buck D."/>
            <person name="Reinhardt R."/>
            <person name="Poustka A."/>
            <person name="Rosenthal A."/>
            <person name="Lehrach H."/>
            <person name="Meindl A."/>
            <person name="Minx P.J."/>
            <person name="Hillier L.W."/>
            <person name="Willard H.F."/>
            <person name="Wilson R.K."/>
            <person name="Waterston R.H."/>
            <person name="Rice C.M."/>
            <person name="Vaudin M."/>
            <person name="Coulson A."/>
            <person name="Nelson D.L."/>
            <person name="Weinstock G."/>
            <person name="Sulston J.E."/>
            <person name="Durbin R.M."/>
            <person name="Hubbard T."/>
            <person name="Gibbs R.A."/>
            <person name="Beck S."/>
            <person name="Rogers J."/>
            <person name="Bentley D.R."/>
        </authorList>
    </citation>
    <scope>NUCLEOTIDE SEQUENCE [LARGE SCALE GENOMIC DNA]</scope>
</reference>
<reference key="2">
    <citation type="journal article" date="2004" name="Genome Res.">
        <title>The status, quality, and expansion of the NIH full-length cDNA project: the Mammalian Gene Collection (MGC).</title>
        <authorList>
            <consortium name="The MGC Project Team"/>
        </authorList>
    </citation>
    <scope>NUCLEOTIDE SEQUENCE [LARGE SCALE MRNA]</scope>
    <source>
        <tissue>Prostate</tissue>
    </source>
</reference>
<name>CX031_HUMAN</name>
<gene>
    <name evidence="1" type="primary">LINC01545</name>
    <name evidence="1" type="synonym">CXorf31</name>
</gene>
<protein>
    <recommendedName>
        <fullName evidence="1">Putative uncharacterized protein encoded by LINC01545</fullName>
    </recommendedName>
</protein>
<organism>
    <name type="scientific">Homo sapiens</name>
    <name type="common">Human</name>
    <dbReference type="NCBI Taxonomy" id="9606"/>
    <lineage>
        <taxon>Eukaryota</taxon>
        <taxon>Metazoa</taxon>
        <taxon>Chordata</taxon>
        <taxon>Craniata</taxon>
        <taxon>Vertebrata</taxon>
        <taxon>Euteleostomi</taxon>
        <taxon>Mammalia</taxon>
        <taxon>Eutheria</taxon>
        <taxon>Euarchontoglires</taxon>
        <taxon>Primates</taxon>
        <taxon>Haplorrhini</taxon>
        <taxon>Catarrhini</taxon>
        <taxon>Hominidae</taxon>
        <taxon>Homo</taxon>
    </lineage>
</organism>
<sequence>MYRMKRSQVRTPIRRLIRNVNLDWEDSMALGCTTVIERGTLRRLKRATLNTFLDSPVHVLLVMPKLIPEHWEKWEDVKR</sequence>
<dbReference type="EMBL" id="AL627143">
    <property type="status" value="NOT_ANNOTATED_CDS"/>
    <property type="molecule type" value="Genomic_DNA"/>
</dbReference>
<dbReference type="EMBL" id="BC038573">
    <property type="status" value="NOT_ANNOTATED_CDS"/>
    <property type="molecule type" value="mRNA"/>
</dbReference>
<dbReference type="BioMuta" id="HGNC:17986"/>
<dbReference type="ProteomicsDB" id="65298"/>
<dbReference type="AGR" id="HGNC:17986"/>
<dbReference type="GeneCards" id="LINC01545"/>
<dbReference type="HGNC" id="HGNC:17986">
    <property type="gene designation" value="LINC01545"/>
</dbReference>
<dbReference type="neXtProt" id="NX_Q5VT33"/>
<dbReference type="InParanoid" id="Q5VT33"/>
<dbReference type="PAN-GO" id="Q5VT33">
    <property type="GO annotations" value="0 GO annotations based on evolutionary models"/>
</dbReference>
<dbReference type="PhylomeDB" id="Q5VT33"/>
<dbReference type="PathwayCommons" id="Q5VT33"/>
<dbReference type="ChiTaRS" id="LINC01545">
    <property type="organism name" value="human"/>
</dbReference>
<dbReference type="Pharos" id="Q5VT33">
    <property type="development level" value="Tdark"/>
</dbReference>
<dbReference type="PRO" id="PR:Q5VT33"/>
<dbReference type="Proteomes" id="UP000005640">
    <property type="component" value="Unplaced"/>
</dbReference>
<dbReference type="RNAct" id="Q5VT33">
    <property type="molecule type" value="protein"/>
</dbReference>
<keyword id="KW-1185">Reference proteome</keyword>
<proteinExistence type="predicted"/>
<feature type="chain" id="PRO_0000271065" description="Putative uncharacterized protein encoded by LINC01545">
    <location>
        <begin position="1"/>
        <end position="79"/>
    </location>
</feature>
<accession>Q5VT33</accession>
<evidence type="ECO:0000312" key="1">
    <source>
        <dbReference type="HGNC" id="HGNC:17986"/>
    </source>
</evidence>